<comment type="function">
    <text>Orphan nuclear receptor.</text>
</comment>
<comment type="subcellular location">
    <subcellularLocation>
        <location evidence="1">Nucleus</location>
    </subcellularLocation>
</comment>
<comment type="alternative products">
    <event type="alternative splicing"/>
    <isoform>
        <id>Q17905-1</id>
        <name>a</name>
        <sequence type="displayed"/>
    </isoform>
    <isoform>
        <id>Q17905-2</id>
        <name>b</name>
        <sequence type="described" ref="VSP_020177"/>
    </isoform>
</comment>
<comment type="tissue specificity">
    <text evidence="3">Expressed in the pharynx, intestine and hypodermis.</text>
</comment>
<comment type="similarity">
    <text evidence="4">Belongs to the nuclear hormone receptor family.</text>
</comment>
<protein>
    <recommendedName>
        <fullName>Nuclear hormone receptor family member nhr-28</fullName>
    </recommendedName>
</protein>
<reference key="1">
    <citation type="journal article" date="2005" name="J. Mol. Evol.">
        <title>Explosive lineage-specific expansion of the orphan nuclear receptor HNF4 in nematodes.</title>
        <authorList>
            <person name="Robinson-Rechavi M."/>
            <person name="Maina C.V."/>
            <person name="Gissendanner C.R."/>
            <person name="Laudet V."/>
            <person name="Sluder A."/>
        </authorList>
    </citation>
    <scope>NUCLEOTIDE SEQUENCE [MRNA] (ISOFORM A)</scope>
</reference>
<reference key="2">
    <citation type="journal article" date="1998" name="Science">
        <title>Genome sequence of the nematode C. elegans: a platform for investigating biology.</title>
        <authorList>
            <consortium name="The C. elegans sequencing consortium"/>
        </authorList>
    </citation>
    <scope>NUCLEOTIDE SEQUENCE [LARGE SCALE GENOMIC DNA]</scope>
    <scope>ALTERNATIVE SPLICING</scope>
    <source>
        <strain>Bristol N2</strain>
    </source>
</reference>
<reference key="3">
    <citation type="journal article" date="1999" name="Dev. Biol.">
        <title>Expression and function of members of a divergent nuclear receptor family in Caenorhabditis elegans.</title>
        <authorList>
            <person name="Miyabayashi T."/>
            <person name="Palfreyman M.T."/>
            <person name="Sluder A.E."/>
            <person name="Slack F."/>
            <person name="Sengupta P."/>
        </authorList>
    </citation>
    <scope>TISSUE SPECIFICITY</scope>
</reference>
<gene>
    <name type="primary">nhr-28</name>
    <name type="ORF">C11G6.4</name>
</gene>
<feature type="chain" id="PRO_0000053775" description="Nuclear hormone receptor family member nhr-28">
    <location>
        <begin position="1"/>
        <end position="437"/>
    </location>
</feature>
<feature type="domain" description="NR LBD" evidence="2">
    <location>
        <begin position="115"/>
        <end position="376"/>
    </location>
</feature>
<feature type="DNA-binding region" description="Nuclear receptor" evidence="1">
    <location>
        <begin position="5"/>
        <end position="80"/>
    </location>
</feature>
<feature type="zinc finger region" description="NR C4-type" evidence="1">
    <location>
        <begin position="8"/>
        <end position="28"/>
    </location>
</feature>
<feature type="zinc finger region" description="NR C4-type" evidence="1">
    <location>
        <begin position="44"/>
        <end position="68"/>
    </location>
</feature>
<feature type="splice variant" id="VSP_020177" description="In isoform b." evidence="4">
    <location>
        <begin position="1"/>
        <end position="58"/>
    </location>
</feature>
<feature type="sequence conflict" description="In Ref. 1; AAG15124." evidence="4" ref="1">
    <original>N</original>
    <variation>D</variation>
    <location>
        <position position="55"/>
    </location>
</feature>
<name>NHR28_CAEEL</name>
<evidence type="ECO:0000255" key="1">
    <source>
        <dbReference type="PROSITE-ProRule" id="PRU00407"/>
    </source>
</evidence>
<evidence type="ECO:0000255" key="2">
    <source>
        <dbReference type="PROSITE-ProRule" id="PRU01189"/>
    </source>
</evidence>
<evidence type="ECO:0000269" key="3">
    <source>
    </source>
</evidence>
<evidence type="ECO:0000305" key="4"/>
<organism>
    <name type="scientific">Caenorhabditis elegans</name>
    <dbReference type="NCBI Taxonomy" id="6239"/>
    <lineage>
        <taxon>Eukaryota</taxon>
        <taxon>Metazoa</taxon>
        <taxon>Ecdysozoa</taxon>
        <taxon>Nematoda</taxon>
        <taxon>Chromadorea</taxon>
        <taxon>Rhabditida</taxon>
        <taxon>Rhabditina</taxon>
        <taxon>Rhabditomorpha</taxon>
        <taxon>Rhabditoidea</taxon>
        <taxon>Rhabditidae</taxon>
        <taxon>Peloderinae</taxon>
        <taxon>Caenorhabditis</taxon>
    </lineage>
</organism>
<proteinExistence type="evidence at transcript level"/>
<sequence>MIIGKSPCSVCGEAGDGAHFGAEACRACAAFFRRSVALNKAYVCRAMGTCVIQKNVRCMCRACRFTKCIAVGMRKSAVQRHRELFASQETSSESSSNPRISPTLSWPMDISPQSYEETGMPTLSQLNENYNQMSTVRRVIHNTGGDNIFHRREPKAVAYTDAHNVHLKEIGLVADWIIKSYPDFEQLHQEQKKLLYRNFFLPFMILECGYMCCLNNRTDILFLPSGDYIDCNRPETFYGHRIKSHLISPNEAVRMFGPSFEIYRRNVLDPMRRENVDNFEFFTLCSLVLWDHGLEGQTEECVQMARCNRERILREVLYYYRRVKQISDPSMRLANLLVLLPALQRSVRRFQEDVEITHVFNVYSVEETFYELVSGRLSDSFFQTTQLTTSVEEEKVIKTEEIDSVWDLNKGQLVEMYEFPTPPLHTPTEMDPSTTQL</sequence>
<keyword id="KW-0025">Alternative splicing</keyword>
<keyword id="KW-0238">DNA-binding</keyword>
<keyword id="KW-0479">Metal-binding</keyword>
<keyword id="KW-0539">Nucleus</keyword>
<keyword id="KW-0675">Receptor</keyword>
<keyword id="KW-1185">Reference proteome</keyword>
<keyword id="KW-0804">Transcription</keyword>
<keyword id="KW-0805">Transcription regulation</keyword>
<keyword id="KW-0862">Zinc</keyword>
<keyword id="KW-0863">Zinc-finger</keyword>
<accession>Q17905</accession>
<accession>Q17906</accession>
<accession>Q5FC68</accession>
<accession>Q5VKU0</accession>
<accession>Q9GTI2</accession>
<accession>Q9GTI3</accession>
<dbReference type="EMBL" id="AF273774">
    <property type="protein sequence ID" value="AAG15123.1"/>
    <property type="molecule type" value="mRNA"/>
</dbReference>
<dbReference type="EMBL" id="AF273775">
    <property type="protein sequence ID" value="AAG15124.1"/>
    <property type="molecule type" value="mRNA"/>
</dbReference>
<dbReference type="EMBL" id="AY305831">
    <property type="protein sequence ID" value="AAR11976.1"/>
    <property type="molecule type" value="mRNA"/>
</dbReference>
<dbReference type="EMBL" id="AY305832">
    <property type="protein sequence ID" value="AAR11977.1"/>
    <property type="molecule type" value="mRNA"/>
</dbReference>
<dbReference type="EMBL" id="Z70204">
    <property type="protein sequence ID" value="CAA94114.2"/>
    <property type="molecule type" value="Genomic_DNA"/>
</dbReference>
<dbReference type="EMBL" id="Z70204">
    <property type="protein sequence ID" value="CAI46566.1"/>
    <property type="molecule type" value="Genomic_DNA"/>
</dbReference>
<dbReference type="PIR" id="T19202">
    <property type="entry name" value="T19202"/>
</dbReference>
<dbReference type="RefSeq" id="NP_001024388.1">
    <molecule id="Q17905-1"/>
    <property type="nucleotide sequence ID" value="NM_001029217.7"/>
</dbReference>
<dbReference type="RefSeq" id="NP_001024389.1">
    <molecule id="Q17905-2"/>
    <property type="nucleotide sequence ID" value="NM_001029218.7"/>
</dbReference>
<dbReference type="SMR" id="Q17905"/>
<dbReference type="BioGRID" id="46590">
    <property type="interactions" value="5"/>
</dbReference>
<dbReference type="FunCoup" id="Q17905">
    <property type="interactions" value="23"/>
</dbReference>
<dbReference type="IntAct" id="Q17905">
    <property type="interactions" value="5"/>
</dbReference>
<dbReference type="STRING" id="6239.C11G6.4a.1"/>
<dbReference type="PaxDb" id="6239-C11G6.4a"/>
<dbReference type="EnsemblMetazoa" id="C11G6.4a.1">
    <molecule id="Q17905-1"/>
    <property type="protein sequence ID" value="C11G6.4a.1"/>
    <property type="gene ID" value="WBGene00003624"/>
</dbReference>
<dbReference type="EnsemblMetazoa" id="C11G6.4b.1">
    <molecule id="Q17905-2"/>
    <property type="protein sequence ID" value="C11G6.4b.1"/>
    <property type="gene ID" value="WBGene00003624"/>
</dbReference>
<dbReference type="EnsemblMetazoa" id="C11G6.4b.2">
    <molecule id="Q17905-2"/>
    <property type="protein sequence ID" value="C11G6.4b.2"/>
    <property type="gene ID" value="WBGene00003624"/>
</dbReference>
<dbReference type="GeneID" id="181705"/>
<dbReference type="KEGG" id="cel:CELE_C11G6.4"/>
<dbReference type="UCSC" id="C11G6.4b.3">
    <molecule id="Q17905-1"/>
    <property type="organism name" value="c. elegans"/>
</dbReference>
<dbReference type="AGR" id="WB:WBGene00003624"/>
<dbReference type="CTD" id="181705"/>
<dbReference type="WormBase" id="C11G6.4a">
    <molecule id="Q17905-1"/>
    <property type="protein sequence ID" value="CE27061"/>
    <property type="gene ID" value="WBGene00003624"/>
    <property type="gene designation" value="nhr-28"/>
</dbReference>
<dbReference type="WormBase" id="C11G6.4b">
    <molecule id="Q17905-2"/>
    <property type="protein sequence ID" value="CE37954"/>
    <property type="gene ID" value="WBGene00003624"/>
    <property type="gene designation" value="nhr-28"/>
</dbReference>
<dbReference type="eggNOG" id="KOG3575">
    <property type="taxonomic scope" value="Eukaryota"/>
</dbReference>
<dbReference type="GeneTree" id="ENSGT00970000196171"/>
<dbReference type="HOGENOM" id="CLU_007368_1_1_1"/>
<dbReference type="InParanoid" id="Q17905"/>
<dbReference type="OMA" id="KNVRCMC"/>
<dbReference type="OrthoDB" id="5830034at2759"/>
<dbReference type="PhylomeDB" id="Q17905"/>
<dbReference type="PRO" id="PR:Q17905"/>
<dbReference type="Proteomes" id="UP000001940">
    <property type="component" value="Chromosome X"/>
</dbReference>
<dbReference type="Bgee" id="WBGene00003624">
    <property type="expression patterns" value="Expressed in pharyngeal muscle cell (C elegans) and 3 other cell types or tissues"/>
</dbReference>
<dbReference type="GO" id="GO:0005634">
    <property type="term" value="C:nucleus"/>
    <property type="evidence" value="ECO:0000318"/>
    <property type="project" value="GO_Central"/>
</dbReference>
<dbReference type="GO" id="GO:0003700">
    <property type="term" value="F:DNA-binding transcription factor activity"/>
    <property type="evidence" value="ECO:0000318"/>
    <property type="project" value="GO_Central"/>
</dbReference>
<dbReference type="GO" id="GO:0000978">
    <property type="term" value="F:RNA polymerase II cis-regulatory region sequence-specific DNA binding"/>
    <property type="evidence" value="ECO:0007669"/>
    <property type="project" value="InterPro"/>
</dbReference>
<dbReference type="GO" id="GO:0008270">
    <property type="term" value="F:zinc ion binding"/>
    <property type="evidence" value="ECO:0007669"/>
    <property type="project" value="UniProtKB-KW"/>
</dbReference>
<dbReference type="GO" id="GO:0006355">
    <property type="term" value="P:regulation of DNA-templated transcription"/>
    <property type="evidence" value="ECO:0000303"/>
    <property type="project" value="UniProtKB"/>
</dbReference>
<dbReference type="GO" id="GO:0006357">
    <property type="term" value="P:regulation of transcription by RNA polymerase II"/>
    <property type="evidence" value="ECO:0000318"/>
    <property type="project" value="GO_Central"/>
</dbReference>
<dbReference type="CDD" id="cd06960">
    <property type="entry name" value="NR_DBD_HNF4A"/>
    <property type="match status" value="1"/>
</dbReference>
<dbReference type="CDD" id="cd06157">
    <property type="entry name" value="NR_LBD"/>
    <property type="match status" value="1"/>
</dbReference>
<dbReference type="Gene3D" id="3.30.50.10">
    <property type="entry name" value="Erythroid Transcription Factor GATA-1, subunit A"/>
    <property type="match status" value="1"/>
</dbReference>
<dbReference type="Gene3D" id="1.10.565.10">
    <property type="entry name" value="Retinoid X Receptor"/>
    <property type="match status" value="1"/>
</dbReference>
<dbReference type="InterPro" id="IPR049636">
    <property type="entry name" value="HNF4-like_DBD"/>
</dbReference>
<dbReference type="InterPro" id="IPR035500">
    <property type="entry name" value="NHR-like_dom_sf"/>
</dbReference>
<dbReference type="InterPro" id="IPR000536">
    <property type="entry name" value="Nucl_hrmn_rcpt_lig-bd"/>
</dbReference>
<dbReference type="InterPro" id="IPR001628">
    <property type="entry name" value="Znf_hrmn_rcpt"/>
</dbReference>
<dbReference type="InterPro" id="IPR013088">
    <property type="entry name" value="Znf_NHR/GATA"/>
</dbReference>
<dbReference type="PANTHER" id="PTHR46011:SF2">
    <property type="entry name" value="NUCLEAR HORMONE RECEPTOR FAMILY MEMBER NHR-28"/>
    <property type="match status" value="1"/>
</dbReference>
<dbReference type="PANTHER" id="PTHR46011">
    <property type="entry name" value="NUCLEAR HORMONE RECEPTOR FAMILY MEMBER NHR-86-RELATED"/>
    <property type="match status" value="1"/>
</dbReference>
<dbReference type="Pfam" id="PF00104">
    <property type="entry name" value="Hormone_recep"/>
    <property type="match status" value="1"/>
</dbReference>
<dbReference type="Pfam" id="PF00105">
    <property type="entry name" value="zf-C4"/>
    <property type="match status" value="1"/>
</dbReference>
<dbReference type="PRINTS" id="PR00047">
    <property type="entry name" value="STROIDFINGER"/>
</dbReference>
<dbReference type="SMART" id="SM00430">
    <property type="entry name" value="HOLI"/>
    <property type="match status" value="1"/>
</dbReference>
<dbReference type="SMART" id="SM00399">
    <property type="entry name" value="ZnF_C4"/>
    <property type="match status" value="1"/>
</dbReference>
<dbReference type="SUPFAM" id="SSF57716">
    <property type="entry name" value="Glucocorticoid receptor-like (DNA-binding domain)"/>
    <property type="match status" value="1"/>
</dbReference>
<dbReference type="SUPFAM" id="SSF48508">
    <property type="entry name" value="Nuclear receptor ligand-binding domain"/>
    <property type="match status" value="1"/>
</dbReference>
<dbReference type="PROSITE" id="PS51843">
    <property type="entry name" value="NR_LBD"/>
    <property type="match status" value="1"/>
</dbReference>
<dbReference type="PROSITE" id="PS00031">
    <property type="entry name" value="NUCLEAR_REC_DBD_1"/>
    <property type="match status" value="1"/>
</dbReference>
<dbReference type="PROSITE" id="PS51030">
    <property type="entry name" value="NUCLEAR_REC_DBD_2"/>
    <property type="match status" value="1"/>
</dbReference>